<dbReference type="EMBL" id="AB026649">
    <property type="status" value="NOT_ANNOTATED_CDS"/>
    <property type="molecule type" value="Genomic_DNA"/>
</dbReference>
<dbReference type="EMBL" id="CP002686">
    <property type="protein sequence ID" value="AEE77266.1"/>
    <property type="molecule type" value="Genomic_DNA"/>
</dbReference>
<dbReference type="EMBL" id="BT010609">
    <property type="protein sequence ID" value="AAQ89631.1"/>
    <property type="molecule type" value="mRNA"/>
</dbReference>
<dbReference type="EMBL" id="AK175619">
    <property type="protein sequence ID" value="BAD43382.1"/>
    <property type="molecule type" value="mRNA"/>
</dbReference>
<dbReference type="RefSeq" id="NP_189346.2">
    <property type="nucleotide sequence ID" value="NM_113624.5"/>
</dbReference>
<dbReference type="SMR" id="Q6NQ54"/>
<dbReference type="BioGRID" id="7659">
    <property type="interactions" value="1"/>
</dbReference>
<dbReference type="FunCoup" id="Q6NQ54">
    <property type="interactions" value="3133"/>
</dbReference>
<dbReference type="IntAct" id="Q6NQ54">
    <property type="interactions" value="1"/>
</dbReference>
<dbReference type="STRING" id="3702.Q6NQ54"/>
<dbReference type="iPTMnet" id="Q6NQ54"/>
<dbReference type="PaxDb" id="3702-AT3G27100.2"/>
<dbReference type="ProteomicsDB" id="221944"/>
<dbReference type="EnsemblPlants" id="AT3G27100.1">
    <property type="protein sequence ID" value="AT3G27100.1"/>
    <property type="gene ID" value="AT3G27100"/>
</dbReference>
<dbReference type="GeneID" id="822329"/>
<dbReference type="Gramene" id="AT3G27100.1">
    <property type="protein sequence ID" value="AT3G27100.1"/>
    <property type="gene ID" value="AT3G27100"/>
</dbReference>
<dbReference type="KEGG" id="ath:AT3G27100"/>
<dbReference type="Araport" id="AT3G27100"/>
<dbReference type="TAIR" id="AT3G27100">
    <property type="gene designation" value="ENY2"/>
</dbReference>
<dbReference type="eggNOG" id="KOG4479">
    <property type="taxonomic scope" value="Eukaryota"/>
</dbReference>
<dbReference type="HOGENOM" id="CLU_134052_0_1_1"/>
<dbReference type="InParanoid" id="Q6NQ54"/>
<dbReference type="OMA" id="RLMCRNI"/>
<dbReference type="PhylomeDB" id="Q6NQ54"/>
<dbReference type="PRO" id="PR:Q6NQ54"/>
<dbReference type="Proteomes" id="UP000006548">
    <property type="component" value="Chromosome 3"/>
</dbReference>
<dbReference type="ExpressionAtlas" id="Q6NQ54">
    <property type="expression patterns" value="baseline and differential"/>
</dbReference>
<dbReference type="GO" id="GO:0071819">
    <property type="term" value="C:DUBm complex"/>
    <property type="evidence" value="ECO:0007669"/>
    <property type="project" value="UniProtKB-UniRule"/>
</dbReference>
<dbReference type="GO" id="GO:0005643">
    <property type="term" value="C:nuclear pore"/>
    <property type="evidence" value="ECO:0007669"/>
    <property type="project" value="UniProtKB-UniRule"/>
</dbReference>
<dbReference type="GO" id="GO:0005654">
    <property type="term" value="C:nucleoplasm"/>
    <property type="evidence" value="ECO:0000314"/>
    <property type="project" value="CACAO"/>
</dbReference>
<dbReference type="GO" id="GO:0000124">
    <property type="term" value="C:SAGA complex"/>
    <property type="evidence" value="ECO:0007669"/>
    <property type="project" value="UniProtKB-UniRule"/>
</dbReference>
<dbReference type="GO" id="GO:0070390">
    <property type="term" value="C:transcription export complex 2"/>
    <property type="evidence" value="ECO:0007669"/>
    <property type="project" value="UniProtKB-UniRule"/>
</dbReference>
<dbReference type="GO" id="GO:0003713">
    <property type="term" value="F:transcription coactivator activity"/>
    <property type="evidence" value="ECO:0007669"/>
    <property type="project" value="UniProtKB-UniRule"/>
</dbReference>
<dbReference type="GO" id="GO:0006325">
    <property type="term" value="P:chromatin organization"/>
    <property type="evidence" value="ECO:0007669"/>
    <property type="project" value="UniProtKB-KW"/>
</dbReference>
<dbReference type="GO" id="GO:0006406">
    <property type="term" value="P:mRNA export from nucleus"/>
    <property type="evidence" value="ECO:0007669"/>
    <property type="project" value="UniProtKB-UniRule"/>
</dbReference>
<dbReference type="GO" id="GO:0015031">
    <property type="term" value="P:protein transport"/>
    <property type="evidence" value="ECO:0007669"/>
    <property type="project" value="UniProtKB-KW"/>
</dbReference>
<dbReference type="GO" id="GO:0006368">
    <property type="term" value="P:transcription elongation by RNA polymerase II"/>
    <property type="evidence" value="ECO:0007669"/>
    <property type="project" value="UniProtKB-UniRule"/>
</dbReference>
<dbReference type="FunFam" id="1.10.246.140:FF:000001">
    <property type="entry name" value="Transcription and mRNA export factor ENY2"/>
    <property type="match status" value="1"/>
</dbReference>
<dbReference type="Gene3D" id="1.10.246.140">
    <property type="match status" value="1"/>
</dbReference>
<dbReference type="HAMAP" id="MF_03046">
    <property type="entry name" value="ENY2_Sus1"/>
    <property type="match status" value="1"/>
</dbReference>
<dbReference type="InterPro" id="IPR018783">
    <property type="entry name" value="TF_ENY2"/>
</dbReference>
<dbReference type="InterPro" id="IPR038212">
    <property type="entry name" value="TF_EnY2_sf"/>
</dbReference>
<dbReference type="PANTHER" id="PTHR12514">
    <property type="entry name" value="ENHANCER OF YELLOW 2 TRANSCRIPTION FACTOR"/>
    <property type="match status" value="1"/>
</dbReference>
<dbReference type="Pfam" id="PF10163">
    <property type="entry name" value="EnY2"/>
    <property type="match status" value="1"/>
</dbReference>
<evidence type="ECO:0000255" key="1">
    <source>
        <dbReference type="HAMAP-Rule" id="MF_03046"/>
    </source>
</evidence>
<evidence type="ECO:0000269" key="2">
    <source>
    </source>
</evidence>
<evidence type="ECO:0000269" key="3">
    <source>
    </source>
</evidence>
<evidence type="ECO:0000303" key="4">
    <source>
    </source>
</evidence>
<evidence type="ECO:0000312" key="5">
    <source>
        <dbReference type="Araport" id="AT3G27100"/>
    </source>
</evidence>
<organism>
    <name type="scientific">Arabidopsis thaliana</name>
    <name type="common">Mouse-ear cress</name>
    <dbReference type="NCBI Taxonomy" id="3702"/>
    <lineage>
        <taxon>Eukaryota</taxon>
        <taxon>Viridiplantae</taxon>
        <taxon>Streptophyta</taxon>
        <taxon>Embryophyta</taxon>
        <taxon>Tracheophyta</taxon>
        <taxon>Spermatophyta</taxon>
        <taxon>Magnoliopsida</taxon>
        <taxon>eudicotyledons</taxon>
        <taxon>Gunneridae</taxon>
        <taxon>Pentapetalae</taxon>
        <taxon>rosids</taxon>
        <taxon>malvids</taxon>
        <taxon>Brassicales</taxon>
        <taxon>Brassicaceae</taxon>
        <taxon>Camelineae</taxon>
        <taxon>Arabidopsis</taxon>
    </lineage>
</organism>
<comment type="function">
    <text evidence="2 3">Component of a deubiquitination module (DUB module) that specifically deubiquinates monoubiquinated histone H2B (H2Bub) (PubMed:29588169, PubMed:30192741). Does not seem to be a component of the TREX-2 complex (PubMed:29588169). Seems to act independently of the SAGA multiprotein complex (PubMed:30192741). The DUB module is responsible for the major H2Bub deubiquitinase activity in Arabidopsis (PubMed:30192741).</text>
</comment>
<comment type="subunit">
    <text evidence="2 3">Component of a deubiquitination module (DUB module) formed by ENY2, SGF11, and UBP22 in Arabidopsis (PubMed:29588169, PubMed:30192741). Interacts directly with SGF11, but not with UBP22 (PubMed:29588169, PubMed:30192741). Interacts with MOS4 (PubMed:29588169).</text>
</comment>
<comment type="subcellular location">
    <subcellularLocation>
        <location evidence="1 2 3">Nucleus</location>
        <location evidence="1 2 3">Nucleoplasm</location>
    </subcellularLocation>
    <text evidence="2 3">Does not localize in nucleolus and displays a rather patchy distribution forming a speckled pattern in the nucleoplasm (PubMed:29588169, PubMed:30192741). Does not localize in the nuclear pore complex at the nuclear periphery (PubMed:29588169, PubMed:30192741).</text>
</comment>
<comment type="tissue specificity">
    <text evidence="2">Expressed in roots, cotyledons, leaves and upper part of sepals.</text>
</comment>
<comment type="similarity">
    <text evidence="1">Belongs to the ENY2 family.</text>
</comment>
<protein>
    <recommendedName>
        <fullName evidence="1">Transcription and mRNA export factor ENY2</fullName>
    </recommendedName>
    <alternativeName>
        <fullName evidence="1">Enhancer of yellow 2 transcription factor homolog</fullName>
    </alternativeName>
</protein>
<proteinExistence type="evidence at protein level"/>
<name>ENY2_ARATH</name>
<feature type="chain" id="PRO_0000423831" description="Transcription and mRNA export factor ENY2">
    <location>
        <begin position="1"/>
        <end position="115"/>
    </location>
</feature>
<accession>Q6NQ54</accession>
<gene>
    <name evidence="4" type="primary">ENY2</name>
    <name evidence="5" type="ordered locus">At3g27100</name>
</gene>
<reference key="1">
    <citation type="journal article" date="2000" name="DNA Res.">
        <title>Structural analysis of Arabidopsis thaliana chromosome 3. I. Sequence features of the regions of 4,504,864 bp covered by sixty P1 and TAC clones.</title>
        <authorList>
            <person name="Sato S."/>
            <person name="Nakamura Y."/>
            <person name="Kaneko T."/>
            <person name="Katoh T."/>
            <person name="Asamizu E."/>
            <person name="Tabata S."/>
        </authorList>
    </citation>
    <scope>NUCLEOTIDE SEQUENCE [LARGE SCALE GENOMIC DNA]</scope>
    <source>
        <strain>cv. Columbia</strain>
    </source>
</reference>
<reference key="2">
    <citation type="journal article" date="2017" name="Plant J.">
        <title>Araport11: a complete reannotation of the Arabidopsis thaliana reference genome.</title>
        <authorList>
            <person name="Cheng C.Y."/>
            <person name="Krishnakumar V."/>
            <person name="Chan A.P."/>
            <person name="Thibaud-Nissen F."/>
            <person name="Schobel S."/>
            <person name="Town C.D."/>
        </authorList>
    </citation>
    <scope>GENOME REANNOTATION</scope>
    <source>
        <strain>cv. Columbia</strain>
    </source>
</reference>
<reference key="3">
    <citation type="submission" date="2003-10" db="EMBL/GenBank/DDBJ databases">
        <title>Arabidopsis ORF clones.</title>
        <authorList>
            <person name="Cheuk R."/>
            <person name="Chen H."/>
            <person name="Kim C.J."/>
            <person name="Shinn P."/>
            <person name="Carninci P."/>
            <person name="Hayashizaki Y."/>
            <person name="Ishida J."/>
            <person name="Kamiya A."/>
            <person name="Kawai J."/>
            <person name="Narusaka M."/>
            <person name="Sakurai T."/>
            <person name="Satou M."/>
            <person name="Seki M."/>
            <person name="Shinozaki K."/>
            <person name="Ecker J.R."/>
        </authorList>
    </citation>
    <scope>NUCLEOTIDE SEQUENCE [LARGE SCALE MRNA]</scope>
    <source>
        <strain>cv. Columbia</strain>
    </source>
</reference>
<reference key="4">
    <citation type="submission" date="2004-09" db="EMBL/GenBank/DDBJ databases">
        <title>Large-scale analysis of RIKEN Arabidopsis full-length (RAFL) cDNAs.</title>
        <authorList>
            <person name="Totoki Y."/>
            <person name="Seki M."/>
            <person name="Ishida J."/>
            <person name="Nakajima M."/>
            <person name="Enju A."/>
            <person name="Kamiya A."/>
            <person name="Narusaka M."/>
            <person name="Shin-i T."/>
            <person name="Nakagawa M."/>
            <person name="Sakamoto N."/>
            <person name="Oishi K."/>
            <person name="Kohara Y."/>
            <person name="Kobayashi M."/>
            <person name="Toyoda A."/>
            <person name="Sakaki Y."/>
            <person name="Sakurai T."/>
            <person name="Iida K."/>
            <person name="Akiyama K."/>
            <person name="Satou M."/>
            <person name="Toyoda T."/>
            <person name="Konagaya A."/>
            <person name="Carninci P."/>
            <person name="Kawai J."/>
            <person name="Hayashizaki Y."/>
            <person name="Shinozaki K."/>
        </authorList>
    </citation>
    <scope>NUCLEOTIDE SEQUENCE [LARGE SCALE MRNA]</scope>
    <source>
        <strain>cv. Columbia</strain>
    </source>
</reference>
<reference key="5">
    <citation type="journal article" date="2010" name="Plant J.">
        <title>Arabidopsis homolog of the yeast TREX-2 mRNA export complex: components and anchoring nucleoporin.</title>
        <authorList>
            <person name="Lu Q."/>
            <person name="Tang X."/>
            <person name="Tian G."/>
            <person name="Wang F."/>
            <person name="Liu K."/>
            <person name="Nguyen V."/>
            <person name="Kohalmi S.E."/>
            <person name="Keller W.A."/>
            <person name="Tsang E.W."/>
            <person name="Harada J.J."/>
            <person name="Rothstein S.J."/>
            <person name="Cui Y."/>
        </authorList>
    </citation>
    <scope>IDENTIFICATION</scope>
</reference>
<reference key="6">
    <citation type="journal article" date="2018" name="J. Mol. Biol.">
        <title>The adaptor protein ENY2 is a component of the deubiquitination module of the Arabidopsis SAGA transcriptional co-activator complex but not of the TREX-2 complex.</title>
        <authorList>
            <person name="Pfab A."/>
            <person name="Bruckmann A."/>
            <person name="Nazet J."/>
            <person name="Merkl R."/>
            <person name="Grasser K.D."/>
        </authorList>
    </citation>
    <scope>FUNCTION</scope>
    <scope>IDENTIFICATION BY MASS SPECTROMETRY</scope>
    <scope>SUBUNIT</scope>
    <scope>INTERACTION WITH SGF11 AND MOS4</scope>
    <scope>SUBCELLULAR LOCATION</scope>
    <scope>TISSUE SPECIFICITY</scope>
</reference>
<reference key="7">
    <citation type="journal article" date="2018" name="Elife">
        <title>DET1-mediated degradation of a SAGA-like deubiquitination module controls H2Bub homeostasis.</title>
        <authorList>
            <person name="Nassrallah A."/>
            <person name="Rougee M."/>
            <person name="Bourbousse C."/>
            <person name="Drevensek S."/>
            <person name="Fonseca S."/>
            <person name="Iniesto E."/>
            <person name="Ait-Mohamed O."/>
            <person name="Deton-Cabanillas A.F."/>
            <person name="Zabulon G."/>
            <person name="Ahmed I."/>
            <person name="Stroebel D."/>
            <person name="Masson V."/>
            <person name="Lombard B."/>
            <person name="Eeckhout D."/>
            <person name="Gevaert K."/>
            <person name="Loew D."/>
            <person name="Genovesio A."/>
            <person name="Breyton C."/>
            <person name="de Jaeger G."/>
            <person name="Bowler C."/>
            <person name="Rubio V."/>
            <person name="Barneche F."/>
        </authorList>
    </citation>
    <scope>FUNCTION</scope>
    <scope>IDENTIFICATION BY MASS SPECTROMETRY</scope>
    <scope>SUBUNIT</scope>
    <scope>INTERACTION WITH SGF11</scope>
    <scope>SUBCELLULAR LOCATION</scope>
</reference>
<keyword id="KW-0010">Activator</keyword>
<keyword id="KW-0156">Chromatin regulator</keyword>
<keyword id="KW-0509">mRNA transport</keyword>
<keyword id="KW-0539">Nucleus</keyword>
<keyword id="KW-0653">Protein transport</keyword>
<keyword id="KW-1185">Reference proteome</keyword>
<keyword id="KW-0804">Transcription</keyword>
<keyword id="KW-0805">Transcription regulation</keyword>
<keyword id="KW-0811">Translocation</keyword>
<keyword id="KW-0813">Transport</keyword>
<keyword id="KW-0833">Ubl conjugation pathway</keyword>
<sequence>MKHSVNRPPTPDEDDVADGFEKDKVTLREIINVKLVESGEKENLMELVRDRLVECGWKDEMRIACREHVKKKGRKDVTVDELIRVITPKGRASVPDSVKAELLNRIQNFIVSAAL</sequence>